<organism>
    <name type="scientific">Schizosaccharomyces pombe (strain 972 / ATCC 24843)</name>
    <name type="common">Fission yeast</name>
    <dbReference type="NCBI Taxonomy" id="284812"/>
    <lineage>
        <taxon>Eukaryota</taxon>
        <taxon>Fungi</taxon>
        <taxon>Dikarya</taxon>
        <taxon>Ascomycota</taxon>
        <taxon>Taphrinomycotina</taxon>
        <taxon>Schizosaccharomycetes</taxon>
        <taxon>Schizosaccharomycetales</taxon>
        <taxon>Schizosaccharomycetaceae</taxon>
        <taxon>Schizosaccharomyces</taxon>
    </lineage>
</organism>
<sequence length="113" mass="13063">MKVTMLPLQLNDEINSASFGPASSSTSHSSTIFCVHHRVRYIYVPRHCLLRSLTYATTNFTKFSKFVYYLAITLHTSLLTKLIYCHADLYALQSIKYKRLRINNGMLDSPKRE</sequence>
<keyword id="KW-1185">Reference proteome</keyword>
<accession>Q9C111</accession>
<gene>
    <name type="ORF">SPAC343.20</name>
</gene>
<protein>
    <recommendedName>
        <fullName>Uncharacterized protein C343.20</fullName>
    </recommendedName>
</protein>
<reference key="1">
    <citation type="journal article" date="2002" name="Nature">
        <title>The genome sequence of Schizosaccharomyces pombe.</title>
        <authorList>
            <person name="Wood V."/>
            <person name="Gwilliam R."/>
            <person name="Rajandream M.A."/>
            <person name="Lyne M.H."/>
            <person name="Lyne R."/>
            <person name="Stewart A."/>
            <person name="Sgouros J.G."/>
            <person name="Peat N."/>
            <person name="Hayles J."/>
            <person name="Baker S.G."/>
            <person name="Basham D."/>
            <person name="Bowman S."/>
            <person name="Brooks K."/>
            <person name="Brown D."/>
            <person name="Brown S."/>
            <person name="Chillingworth T."/>
            <person name="Churcher C.M."/>
            <person name="Collins M."/>
            <person name="Connor R."/>
            <person name="Cronin A."/>
            <person name="Davis P."/>
            <person name="Feltwell T."/>
            <person name="Fraser A."/>
            <person name="Gentles S."/>
            <person name="Goble A."/>
            <person name="Hamlin N."/>
            <person name="Harris D.E."/>
            <person name="Hidalgo J."/>
            <person name="Hodgson G."/>
            <person name="Holroyd S."/>
            <person name="Hornsby T."/>
            <person name="Howarth S."/>
            <person name="Huckle E.J."/>
            <person name="Hunt S."/>
            <person name="Jagels K."/>
            <person name="James K.D."/>
            <person name="Jones L."/>
            <person name="Jones M."/>
            <person name="Leather S."/>
            <person name="McDonald S."/>
            <person name="McLean J."/>
            <person name="Mooney P."/>
            <person name="Moule S."/>
            <person name="Mungall K.L."/>
            <person name="Murphy L.D."/>
            <person name="Niblett D."/>
            <person name="Odell C."/>
            <person name="Oliver K."/>
            <person name="O'Neil S."/>
            <person name="Pearson D."/>
            <person name="Quail M.A."/>
            <person name="Rabbinowitsch E."/>
            <person name="Rutherford K.M."/>
            <person name="Rutter S."/>
            <person name="Saunders D."/>
            <person name="Seeger K."/>
            <person name="Sharp S."/>
            <person name="Skelton J."/>
            <person name="Simmonds M.N."/>
            <person name="Squares R."/>
            <person name="Squares S."/>
            <person name="Stevens K."/>
            <person name="Taylor K."/>
            <person name="Taylor R.G."/>
            <person name="Tivey A."/>
            <person name="Walsh S.V."/>
            <person name="Warren T."/>
            <person name="Whitehead S."/>
            <person name="Woodward J.R."/>
            <person name="Volckaert G."/>
            <person name="Aert R."/>
            <person name="Robben J."/>
            <person name="Grymonprez B."/>
            <person name="Weltjens I."/>
            <person name="Vanstreels E."/>
            <person name="Rieger M."/>
            <person name="Schaefer M."/>
            <person name="Mueller-Auer S."/>
            <person name="Gabel C."/>
            <person name="Fuchs M."/>
            <person name="Duesterhoeft A."/>
            <person name="Fritzc C."/>
            <person name="Holzer E."/>
            <person name="Moestl D."/>
            <person name="Hilbert H."/>
            <person name="Borzym K."/>
            <person name="Langer I."/>
            <person name="Beck A."/>
            <person name="Lehrach H."/>
            <person name="Reinhardt R."/>
            <person name="Pohl T.M."/>
            <person name="Eger P."/>
            <person name="Zimmermann W."/>
            <person name="Wedler H."/>
            <person name="Wambutt R."/>
            <person name="Purnelle B."/>
            <person name="Goffeau A."/>
            <person name="Cadieu E."/>
            <person name="Dreano S."/>
            <person name="Gloux S."/>
            <person name="Lelaure V."/>
            <person name="Mottier S."/>
            <person name="Galibert F."/>
            <person name="Aves S.J."/>
            <person name="Xiang Z."/>
            <person name="Hunt C."/>
            <person name="Moore K."/>
            <person name="Hurst S.M."/>
            <person name="Lucas M."/>
            <person name="Rochet M."/>
            <person name="Gaillardin C."/>
            <person name="Tallada V.A."/>
            <person name="Garzon A."/>
            <person name="Thode G."/>
            <person name="Daga R.R."/>
            <person name="Cruzado L."/>
            <person name="Jimenez J."/>
            <person name="Sanchez M."/>
            <person name="del Rey F."/>
            <person name="Benito J."/>
            <person name="Dominguez A."/>
            <person name="Revuelta J.L."/>
            <person name="Moreno S."/>
            <person name="Armstrong J."/>
            <person name="Forsburg S.L."/>
            <person name="Cerutti L."/>
            <person name="Lowe T."/>
            <person name="McCombie W.R."/>
            <person name="Paulsen I."/>
            <person name="Potashkin J."/>
            <person name="Shpakovski G.V."/>
            <person name="Ussery D."/>
            <person name="Barrell B.G."/>
            <person name="Nurse P."/>
        </authorList>
    </citation>
    <scope>NUCLEOTIDE SEQUENCE [LARGE SCALE GENOMIC DNA]</scope>
    <source>
        <strain>972 / ATCC 24843</strain>
    </source>
</reference>
<dbReference type="EMBL" id="CU329670">
    <property type="protein sequence ID" value="CAC34962.1"/>
    <property type="molecule type" value="Genomic_DNA"/>
</dbReference>
<dbReference type="RefSeq" id="NP_593433.1">
    <property type="nucleotide sequence ID" value="NM_001018866.2"/>
</dbReference>
<dbReference type="STRING" id="284812.Q9C111"/>
<dbReference type="PaxDb" id="4896-SPAC343.20.1"/>
<dbReference type="EnsemblFungi" id="SPAC343.20.1">
    <property type="protein sequence ID" value="SPAC343.20.1:pep"/>
    <property type="gene ID" value="SPAC343.20"/>
</dbReference>
<dbReference type="KEGG" id="spo:2543162"/>
<dbReference type="PomBase" id="SPAC343.20"/>
<dbReference type="VEuPathDB" id="FungiDB:SPAC343.20"/>
<dbReference type="HOGENOM" id="CLU_2134996_0_0_1"/>
<dbReference type="InParanoid" id="Q9C111"/>
<dbReference type="PRO" id="PR:Q9C111"/>
<dbReference type="Proteomes" id="UP000002485">
    <property type="component" value="Chromosome I"/>
</dbReference>
<name>YIPK_SCHPO</name>
<feature type="chain" id="PRO_0000116796" description="Uncharacterized protein C343.20">
    <location>
        <begin position="1"/>
        <end position="113"/>
    </location>
</feature>
<proteinExistence type="predicted"/>